<organism>
    <name type="scientific">Caenorhabditis elegans</name>
    <dbReference type="NCBI Taxonomy" id="6239"/>
    <lineage>
        <taxon>Eukaryota</taxon>
        <taxon>Metazoa</taxon>
        <taxon>Ecdysozoa</taxon>
        <taxon>Nematoda</taxon>
        <taxon>Chromadorea</taxon>
        <taxon>Rhabditida</taxon>
        <taxon>Rhabditina</taxon>
        <taxon>Rhabditomorpha</taxon>
        <taxon>Rhabditoidea</taxon>
        <taxon>Rhabditidae</taxon>
        <taxon>Peloderinae</taxon>
        <taxon>Caenorhabditis</taxon>
    </lineage>
</organism>
<feature type="chain" id="PRO_0000106422" description="N-terminal acetyltransferase B complex subunit NAA25 homolog" evidence="5">
    <location>
        <begin position="1"/>
        <end position="958"/>
    </location>
</feature>
<feature type="repeat" description="TPR 1" evidence="2">
    <location>
        <begin position="7"/>
        <end position="42"/>
    </location>
</feature>
<feature type="repeat" description="TPR 2" evidence="2">
    <location>
        <begin position="78"/>
        <end position="111"/>
    </location>
</feature>
<feature type="repeat" description="TPR 3" evidence="2">
    <location>
        <begin position="320"/>
        <end position="353"/>
    </location>
</feature>
<reference key="1">
    <citation type="journal article" date="1998" name="Science">
        <title>Genome sequence of the nematode C. elegans: a platform for investigating biology.</title>
        <authorList>
            <consortium name="The C. elegans sequencing consortium"/>
        </authorList>
    </citation>
    <scope>NUCLEOTIDE SEQUENCE [LARGE SCALE GENOMIC DNA]</scope>
    <source>
        <strain>Bristol N2</strain>
    </source>
</reference>
<reference key="2">
    <citation type="journal article" date="2008" name="PLoS Genet.">
        <title>CRA-1 uncovers a double-strand break-dependent pathway promoting the assembly of central region proteins on chromosome axes during C. elegans meiosis.</title>
        <authorList>
            <person name="Smolikov S."/>
            <person name="Schild-Prufert K."/>
            <person name="Colaiacovo M.P."/>
        </authorList>
    </citation>
    <scope>FUNCTION</scope>
    <scope>DISRUPTION PHENOTYPE</scope>
</reference>
<reference key="3">
    <citation type="journal article" date="2015" name="PLoS Genet.">
        <title>NatB domain-containing cra-1 antagonizes hydrolase acer-1 linking acetyl-CoA metabolism to the initiation of recombination during C. elegans meiosis.</title>
        <authorList>
            <person name="Gao J."/>
            <person name="Kim H.M."/>
            <person name="Elia A.E."/>
            <person name="Elledge S.J."/>
            <person name="Colaiacovo M.P."/>
        </authorList>
    </citation>
    <scope>FUNCTION</scope>
    <scope>INTERACTION WITH ACER-1</scope>
    <scope>SUBCELLULAR LOCATION</scope>
    <scope>TISSUE SPECIFICITY</scope>
    <scope>DEVELOPMENTAL STAGE</scope>
    <scope>DISRUPTION PHENOTYPE</scope>
</reference>
<gene>
    <name evidence="6" type="primary">cra-1</name>
    <name evidence="6" type="ORF">R13F6.10</name>
</gene>
<accession>Q21986</accession>
<evidence type="ECO:0000250" key="1">
    <source>
        <dbReference type="UniProtKB" id="Q14CX7"/>
    </source>
</evidence>
<evidence type="ECO:0000255" key="2"/>
<evidence type="ECO:0000269" key="3">
    <source>
    </source>
</evidence>
<evidence type="ECO:0000269" key="4">
    <source>
    </source>
</evidence>
<evidence type="ECO:0000305" key="5"/>
<evidence type="ECO:0000312" key="6">
    <source>
        <dbReference type="WormBase" id="R13F6.10"/>
    </source>
</evidence>
<keyword id="KW-0158">Chromosome</keyword>
<keyword id="KW-0159">Chromosome partition</keyword>
<keyword id="KW-0963">Cytoplasm</keyword>
<keyword id="KW-0227">DNA damage</keyword>
<keyword id="KW-0233">DNA recombination</keyword>
<keyword id="KW-0234">DNA repair</keyword>
<keyword id="KW-0469">Meiosis</keyword>
<keyword id="KW-0539">Nucleus</keyword>
<keyword id="KW-1185">Reference proteome</keyword>
<keyword id="KW-0677">Repeat</keyword>
<keyword id="KW-0802">TPR repeat</keyword>
<name>NAA25_CAEEL</name>
<comment type="function">
    <text evidence="1 3 4">Non-catalytic subunit of the NatB complex which catalyzes acetylation of the N-terminal methionine residues of proteins beginning with Met-Asp or Met-Glu (By similarity). Required for chromosome organization and arrangement; specifically for assembly of the central region components of the synaptonemal complex onto chromosomes during meiosis and for DNA double stranded break formation and repair (PubMed:18535664, PubMed:25768301). Acts downstream of xnd-1 to regulate levels of histone acetylation in germ and somatic cell nuclei by controlling acetyl-CoA production through antagonizing the acetyl-CoA hydrolase activity of acer-1 (PubMed:25768301).</text>
</comment>
<comment type="subunit">
    <text evidence="1 4">Component of the N-terminal acetyltransferase B (NatB) complex (By similarity). Interacts with acer-1 (PubMed:25768301).</text>
</comment>
<comment type="subcellular location">
    <subcellularLocation>
        <location evidence="1">Cytoplasm</location>
    </subcellularLocation>
    <subcellularLocation>
        <location evidence="4">Nucleus</location>
    </subcellularLocation>
    <subcellularLocation>
        <location evidence="4">Chromosome</location>
    </subcellularLocation>
    <text evidence="4">Localizes to meiotic germline nuclei where it is first expressed in early prophase nuclei with expression increasing as nuclei progress into the pachytene stage. Expressed from interphase to prophase and at low levels from prometaphase to anaphase in mitotic nuclei. Highly expressed on autosomes during early to mid prophase.</text>
</comment>
<comment type="tissue specificity">
    <text evidence="4">Expressed in germline and somatic cells.</text>
</comment>
<comment type="developmental stage">
    <text evidence="4">Expressed in embryo and adult.</text>
</comment>
<comment type="disruption phenotype">
    <text evidence="3 4">High embryonic and larval lethality with viable progeny displaying a high incidence of males phenotype (PubMed:18535664, PubMed:25768301). Defective chromosomal morphogenesis, segregation and alignment due to the failure of central region components of the synaptonemal complex to assemble onto chromosomes during meiosis (PubMed:18535664). Severe chromosomal and meiotic defects include a delay in chromosome dispersal upon entry into the pachytene stage; impaired stability of homologous pairing interactions resulting in a failure to form chiasmata for crossover recombination, and increased DNA double strand break repair upon entry into and throughout the pachytene stage of meiosis possibly resulting in impaired meiotic recombination (PubMed:18535664). Germ cell defects resulting in increased germ cell apoptosis (PubMed:18535664). Decreased histone acetylation in meiotic germ cell nuclei from the premeiotic tip to the late pachytene stage with the most prominent decrease upon meiotic entry and during the pachytene stages (PubMed:25768301). Decreased acetyl-CoA production (PubMed:25768301). RNAi-mediated knockdown results in reduced histone H2AK5 acetylation (PubMed:25768301).</text>
</comment>
<comment type="similarity">
    <text evidence="5">Belongs to the MDM20/NAA25 family.</text>
</comment>
<sequence>MSKAELAVLERRLRPIYDSLDSQQFKKALSDCDKVLKKHPNTSAAKVLKALTLIRLEKLADATEILEALDVPGAHHDELTLQAFVHCYRDSNQHMKVVTLYERIIQVDPSEHNLTQLFMAYSREKMYKEQQKIGMRLYKDFGNAPYYFWSVMSLIMQAQENPELGKKMLLPLADKMCQTQVEKSGYTEGSSAELDLQLLILEGQEKWKECAAFLDRPQASVLPMAPYNLVEKGMDFLMKDKQYKRVDQLAMEAVTKMPDNWNLWKIITESTICQIEQCLESDNKENIELAHNFVKRLGLLIEKVQKQVGYKSRAPFIATFFAYKQIGKLTKQIPDMDDMTSIFGEQVDKMLEYAKNFYKKPVCFADLQMFFCDLTSEQKSNFLKGIDLWIGEVSAKDDVEGDESKVWAIILTERCRRALGEYEKMDAAGHRSLFQQCIAQIAAPERTEHAQGVLCNLTVSHLWDAYRKENDLTKFYEMILLLEFVAASNKTDPMCKLALIRAYSALCATGRISALVKTLDIKVIQMDTLGHLTFPVYETSGRFNLAIIQNTQLSLMYEQAEKEIQDCIAQAYRNGKFSAIPRMTAASKHMKLSAQKTACDVMNRYLSSLFVLDDVDQITVTLWGDEDPIGEKRIDWKQLIDTRDFNAIPYTETEEYEALLDDMKKRTFKELIDISELRSTLCRALGAVGRVTHENMEPRLARLQLKMTVMEFKQHLEYCCREYPSFLIPSKLAQSPAPHHLSQWVHSGGLQMVLEYLEAAVKLVDILDSGEHPEKSLVGTRTEMATKLIKLIEIPPKRKEGEKLPPFWIVDPIIKSSRALQTIAAIQVVLRLIEKVVLKLVKNVPTAVPEPVGKGKGKKDKKAAEEAMTKALDECKAVVFLEHIRAMHVELRSAGNFLHTYLGQMLALEDEYIPSNIGEDLGGAKAALEGMHNPVASRLQRSFLNTCEDMHTTIKLRF</sequence>
<dbReference type="EMBL" id="FO081247">
    <property type="protein sequence ID" value="CCD70181.1"/>
    <property type="molecule type" value="Genomic_DNA"/>
</dbReference>
<dbReference type="PIR" id="T16751">
    <property type="entry name" value="T16751"/>
</dbReference>
<dbReference type="RefSeq" id="NP_498494.2">
    <property type="nucleotide sequence ID" value="NM_066093.4"/>
</dbReference>
<dbReference type="SMR" id="Q21986"/>
<dbReference type="BioGRID" id="41171">
    <property type="interactions" value="36"/>
</dbReference>
<dbReference type="FunCoup" id="Q21986">
    <property type="interactions" value="3511"/>
</dbReference>
<dbReference type="IntAct" id="Q21986">
    <property type="interactions" value="1"/>
</dbReference>
<dbReference type="MINT" id="Q21986"/>
<dbReference type="STRING" id="6239.R13F6.10.1"/>
<dbReference type="PaxDb" id="6239-R13F6.10"/>
<dbReference type="PeptideAtlas" id="Q21986"/>
<dbReference type="EnsemblMetazoa" id="R13F6.10.1">
    <property type="protein sequence ID" value="R13F6.10.1"/>
    <property type="gene ID" value="WBGene00020068"/>
</dbReference>
<dbReference type="GeneID" id="175956"/>
<dbReference type="KEGG" id="cel:CELE_R13F6.10"/>
<dbReference type="UCSC" id="R13F6.10">
    <property type="organism name" value="c. elegans"/>
</dbReference>
<dbReference type="AGR" id="WB:WBGene00020068"/>
<dbReference type="CTD" id="175956"/>
<dbReference type="WormBase" id="R13F6.10">
    <property type="protein sequence ID" value="CE31579"/>
    <property type="gene ID" value="WBGene00020068"/>
    <property type="gene designation" value="cra-1"/>
</dbReference>
<dbReference type="eggNOG" id="KOG2053">
    <property type="taxonomic scope" value="Eukaryota"/>
</dbReference>
<dbReference type="GeneTree" id="ENSGT00950000183174"/>
<dbReference type="HOGENOM" id="CLU_008075_0_0_1"/>
<dbReference type="InParanoid" id="Q21986"/>
<dbReference type="OMA" id="IHYTELA"/>
<dbReference type="OrthoDB" id="1874341at2759"/>
<dbReference type="PhylomeDB" id="Q21986"/>
<dbReference type="PRO" id="PR:Q21986"/>
<dbReference type="Proteomes" id="UP000001940">
    <property type="component" value="Chromosome III"/>
</dbReference>
<dbReference type="Bgee" id="WBGene00020068">
    <property type="expression patterns" value="Expressed in germ line (C elegans) and 4 other cell types or tissues"/>
</dbReference>
<dbReference type="GO" id="GO:0005694">
    <property type="term" value="C:chromosome"/>
    <property type="evidence" value="ECO:0007669"/>
    <property type="project" value="UniProtKB-SubCell"/>
</dbReference>
<dbReference type="GO" id="GO:0005737">
    <property type="term" value="C:cytoplasm"/>
    <property type="evidence" value="ECO:0000318"/>
    <property type="project" value="GO_Central"/>
</dbReference>
<dbReference type="GO" id="GO:0031416">
    <property type="term" value="C:NatB complex"/>
    <property type="evidence" value="ECO:0000318"/>
    <property type="project" value="GO_Central"/>
</dbReference>
<dbReference type="GO" id="GO:0005634">
    <property type="term" value="C:nucleus"/>
    <property type="evidence" value="ECO:0007669"/>
    <property type="project" value="UniProtKB-SubCell"/>
</dbReference>
<dbReference type="GO" id="GO:0010698">
    <property type="term" value="F:acetyltransferase activator activity"/>
    <property type="evidence" value="ECO:0000318"/>
    <property type="project" value="GO_Central"/>
</dbReference>
<dbReference type="GO" id="GO:0007059">
    <property type="term" value="P:chromosome segregation"/>
    <property type="evidence" value="ECO:0007669"/>
    <property type="project" value="UniProtKB-KW"/>
</dbReference>
<dbReference type="GO" id="GO:0007010">
    <property type="term" value="P:cytoskeleton organization"/>
    <property type="evidence" value="ECO:0000318"/>
    <property type="project" value="GO_Central"/>
</dbReference>
<dbReference type="GO" id="GO:0006310">
    <property type="term" value="P:DNA recombination"/>
    <property type="evidence" value="ECO:0007669"/>
    <property type="project" value="UniProtKB-KW"/>
</dbReference>
<dbReference type="GO" id="GO:0006281">
    <property type="term" value="P:DNA repair"/>
    <property type="evidence" value="ECO:0007669"/>
    <property type="project" value="UniProtKB-KW"/>
</dbReference>
<dbReference type="GO" id="GO:0051321">
    <property type="term" value="P:meiotic cell cycle"/>
    <property type="evidence" value="ECO:0007669"/>
    <property type="project" value="UniProtKB-KW"/>
</dbReference>
<dbReference type="FunFam" id="1.25.40.1040:FF:000021">
    <property type="entry name" value="N-terminal acetyltransferase B complex subunit NAA25 homolog"/>
    <property type="match status" value="1"/>
</dbReference>
<dbReference type="Gene3D" id="1.25.40.1040">
    <property type="match status" value="1"/>
</dbReference>
<dbReference type="InterPro" id="IPR019183">
    <property type="entry name" value="NAA25_NatB_aux_su"/>
</dbReference>
<dbReference type="InterPro" id="IPR011990">
    <property type="entry name" value="TPR-like_helical_dom_sf"/>
</dbReference>
<dbReference type="PANTHER" id="PTHR22767:SF3">
    <property type="entry name" value="N-ALPHA-ACETYLTRANSFERASE 25, NATB AUXILIARY SUBUNIT"/>
    <property type="match status" value="1"/>
</dbReference>
<dbReference type="PANTHER" id="PTHR22767">
    <property type="entry name" value="N-TERMINAL ACETYLTRANSFERASE-RELATED"/>
    <property type="match status" value="1"/>
</dbReference>
<dbReference type="Pfam" id="PF09797">
    <property type="entry name" value="NatB_MDM20"/>
    <property type="match status" value="1"/>
</dbReference>
<dbReference type="SUPFAM" id="SSF48452">
    <property type="entry name" value="TPR-like"/>
    <property type="match status" value="1"/>
</dbReference>
<proteinExistence type="evidence at protein level"/>
<protein>
    <recommendedName>
        <fullName evidence="1">N-terminal acetyltransferase B complex subunit NAA25 homolog</fullName>
    </recommendedName>
    <alternativeName>
        <fullName evidence="6">Central region assembly in meiosis abnormal protein 1</fullName>
    </alternativeName>
    <alternativeName>
        <fullName evidence="1">N-terminal acetyltransferase B complex subunit MDM20 homolog</fullName>
    </alternativeName>
</protein>